<sequence length="179" mass="19608">MASQNRDPVAASVAAARKGAEPSGGAARGPVGKRLQQELMTLMMSGDKGISAFPESDNLFKWVGTIHGAAGTVYEDLRYKLSLEFPSGYPYNAPTVKFLTPCYHPNVDTQGNICLDILKDKWSALYDVRTILLSIQSLLGEPNIDSPLNTHAAELWKNPTAFKKYLQETYSKQVSSQDP</sequence>
<name>UBE2C_BOVIN</name>
<accession>Q32PA5</accession>
<organism>
    <name type="scientific">Bos taurus</name>
    <name type="common">Bovine</name>
    <dbReference type="NCBI Taxonomy" id="9913"/>
    <lineage>
        <taxon>Eukaryota</taxon>
        <taxon>Metazoa</taxon>
        <taxon>Chordata</taxon>
        <taxon>Craniata</taxon>
        <taxon>Vertebrata</taxon>
        <taxon>Euteleostomi</taxon>
        <taxon>Mammalia</taxon>
        <taxon>Eutheria</taxon>
        <taxon>Laurasiatheria</taxon>
        <taxon>Artiodactyla</taxon>
        <taxon>Ruminantia</taxon>
        <taxon>Pecora</taxon>
        <taxon>Bovidae</taxon>
        <taxon>Bovinae</taxon>
        <taxon>Bos</taxon>
    </lineage>
</organism>
<protein>
    <recommendedName>
        <fullName>Ubiquitin-conjugating enzyme E2 C</fullName>
        <ecNumber>2.3.2.23</ecNumber>
    </recommendedName>
    <alternativeName>
        <fullName>(E3-independent) E2 ubiquitin-conjugating enzyme C</fullName>
        <ecNumber>2.3.2.24</ecNumber>
    </alternativeName>
    <alternativeName>
        <fullName>E2 ubiquitin-conjugating enzyme C</fullName>
    </alternativeName>
    <alternativeName>
        <fullName>Ubiquitin carrier protein C</fullName>
    </alternativeName>
    <alternativeName>
        <fullName>Ubiquitin-protein ligase C</fullName>
    </alternativeName>
</protein>
<reference key="1">
    <citation type="submission" date="2005-10" db="EMBL/GenBank/DDBJ databases">
        <authorList>
            <consortium name="NIH - Mammalian Gene Collection (MGC) project"/>
        </authorList>
    </citation>
    <scope>NUCLEOTIDE SEQUENCE [LARGE SCALE MRNA]</scope>
    <source>
        <strain>Crossbred X Angus</strain>
        <tissue>Liver</tissue>
    </source>
</reference>
<evidence type="ECO:0000250" key="1">
    <source>
        <dbReference type="UniProtKB" id="O00762"/>
    </source>
</evidence>
<evidence type="ECO:0000255" key="2">
    <source>
        <dbReference type="PROSITE-ProRule" id="PRU00388"/>
    </source>
</evidence>
<evidence type="ECO:0000255" key="3">
    <source>
        <dbReference type="PROSITE-ProRule" id="PRU10133"/>
    </source>
</evidence>
<evidence type="ECO:0000256" key="4">
    <source>
        <dbReference type="SAM" id="MobiDB-lite"/>
    </source>
</evidence>
<dbReference type="EC" id="2.3.2.23"/>
<dbReference type="EC" id="2.3.2.24"/>
<dbReference type="EMBL" id="BC108195">
    <property type="protein sequence ID" value="AAI08196.1"/>
    <property type="molecule type" value="mRNA"/>
</dbReference>
<dbReference type="RefSeq" id="NP_001032526.1">
    <property type="nucleotide sequence ID" value="NM_001037449.2"/>
</dbReference>
<dbReference type="SMR" id="Q32PA5"/>
<dbReference type="FunCoup" id="Q32PA5">
    <property type="interactions" value="1698"/>
</dbReference>
<dbReference type="STRING" id="9913.ENSBTAP00000057196"/>
<dbReference type="PaxDb" id="9913-ENSBTAP00000022264"/>
<dbReference type="GeneID" id="506962"/>
<dbReference type="KEGG" id="bta:506962"/>
<dbReference type="CTD" id="11065"/>
<dbReference type="VEuPathDB" id="HostDB:ENSBTAG00000016746"/>
<dbReference type="eggNOG" id="KOG0421">
    <property type="taxonomic scope" value="Eukaryota"/>
</dbReference>
<dbReference type="HOGENOM" id="CLU_030988_9_2_1"/>
<dbReference type="InParanoid" id="Q32PA5"/>
<dbReference type="OMA" id="PKDNHAV"/>
<dbReference type="OrthoDB" id="10253686at2759"/>
<dbReference type="TreeFam" id="TF101116"/>
<dbReference type="Reactome" id="R-BTA-141430">
    <property type="pathway name" value="Inactivation of APC/C via direct inhibition of the APC/C complex"/>
</dbReference>
<dbReference type="Reactome" id="R-BTA-174048">
    <property type="pathway name" value="APC/C:Cdc20 mediated degradation of Cyclin B"/>
</dbReference>
<dbReference type="Reactome" id="R-BTA-174084">
    <property type="pathway name" value="Autodegradation of Cdh1 by Cdh1:APC/C"/>
</dbReference>
<dbReference type="Reactome" id="R-BTA-174154">
    <property type="pathway name" value="APC/C:Cdc20 mediated degradation of Securin"/>
</dbReference>
<dbReference type="Reactome" id="R-BTA-174178">
    <property type="pathway name" value="APC/C:Cdh1 mediated degradation of Cdc20 and other APC/C:Cdh1 targeted proteins in late mitosis/early G1"/>
</dbReference>
<dbReference type="Reactome" id="R-BTA-174184">
    <property type="pathway name" value="Cdc20:Phospho-APC/C mediated degradation of Cyclin A"/>
</dbReference>
<dbReference type="Reactome" id="R-BTA-176407">
    <property type="pathway name" value="Conversion from APC/C:Cdc20 to APC/C:Cdh1 in late anaphase"/>
</dbReference>
<dbReference type="Reactome" id="R-BTA-176408">
    <property type="pathway name" value="Regulation of APC/C activators between G1/S and early anaphase"/>
</dbReference>
<dbReference type="Reactome" id="R-BTA-176409">
    <property type="pathway name" value="APC/C:Cdc20 mediated degradation of mitotic proteins"/>
</dbReference>
<dbReference type="Reactome" id="R-BTA-176412">
    <property type="pathway name" value="Phosphorylation of the APC/C"/>
</dbReference>
<dbReference type="Reactome" id="R-BTA-179409">
    <property type="pathway name" value="APC-Cdc20 mediated degradation of Nek2A"/>
</dbReference>
<dbReference type="Reactome" id="R-BTA-2467813">
    <property type="pathway name" value="Separation of Sister Chromatids"/>
</dbReference>
<dbReference type="Reactome" id="R-BTA-2559582">
    <property type="pathway name" value="Senescence-Associated Secretory Phenotype (SASP)"/>
</dbReference>
<dbReference type="Reactome" id="R-BTA-68867">
    <property type="pathway name" value="Assembly of the pre-replicative complex"/>
</dbReference>
<dbReference type="Reactome" id="R-BTA-69017">
    <property type="pathway name" value="CDK-mediated phosphorylation and removal of Cdc6"/>
</dbReference>
<dbReference type="Reactome" id="R-BTA-8866652">
    <property type="pathway name" value="Synthesis of active ubiquitin: roles of E1 and E2 enzymes"/>
</dbReference>
<dbReference type="Reactome" id="R-BTA-983168">
    <property type="pathway name" value="Antigen processing: Ubiquitination &amp; Proteasome degradation"/>
</dbReference>
<dbReference type="UniPathway" id="UPA00143"/>
<dbReference type="Proteomes" id="UP000009136">
    <property type="component" value="Chromosome 13"/>
</dbReference>
<dbReference type="Bgee" id="ENSBTAG00000016746">
    <property type="expression patterns" value="Expressed in oocyte and 108 other cell types or tissues"/>
</dbReference>
<dbReference type="GO" id="GO:0005680">
    <property type="term" value="C:anaphase-promoting complex"/>
    <property type="evidence" value="ECO:0000250"/>
    <property type="project" value="UniProtKB"/>
</dbReference>
<dbReference type="GO" id="GO:0005634">
    <property type="term" value="C:nucleus"/>
    <property type="evidence" value="ECO:0000318"/>
    <property type="project" value="GO_Central"/>
</dbReference>
<dbReference type="GO" id="GO:0005524">
    <property type="term" value="F:ATP binding"/>
    <property type="evidence" value="ECO:0007669"/>
    <property type="project" value="UniProtKB-KW"/>
</dbReference>
<dbReference type="GO" id="GO:0061631">
    <property type="term" value="F:ubiquitin conjugating enzyme activity"/>
    <property type="evidence" value="ECO:0000318"/>
    <property type="project" value="GO_Central"/>
</dbReference>
<dbReference type="GO" id="GO:0031145">
    <property type="term" value="P:anaphase-promoting complex-dependent catabolic process"/>
    <property type="evidence" value="ECO:0000250"/>
    <property type="project" value="UniProtKB"/>
</dbReference>
<dbReference type="GO" id="GO:0051301">
    <property type="term" value="P:cell division"/>
    <property type="evidence" value="ECO:0007669"/>
    <property type="project" value="UniProtKB-KW"/>
</dbReference>
<dbReference type="GO" id="GO:0010458">
    <property type="term" value="P:exit from mitosis"/>
    <property type="evidence" value="ECO:0000250"/>
    <property type="project" value="UniProtKB"/>
</dbReference>
<dbReference type="GO" id="GO:0010994">
    <property type="term" value="P:free ubiquitin chain polymerization"/>
    <property type="evidence" value="ECO:0000250"/>
    <property type="project" value="UniProtKB"/>
</dbReference>
<dbReference type="GO" id="GO:0070979">
    <property type="term" value="P:protein K11-linked ubiquitination"/>
    <property type="evidence" value="ECO:0000250"/>
    <property type="project" value="UniProtKB"/>
</dbReference>
<dbReference type="GO" id="GO:0070936">
    <property type="term" value="P:protein K48-linked ubiquitination"/>
    <property type="evidence" value="ECO:0000250"/>
    <property type="project" value="UniProtKB"/>
</dbReference>
<dbReference type="GO" id="GO:0000209">
    <property type="term" value="P:protein polyubiquitination"/>
    <property type="evidence" value="ECO:0000318"/>
    <property type="project" value="GO_Central"/>
</dbReference>
<dbReference type="GO" id="GO:0030071">
    <property type="term" value="P:regulation of mitotic metaphase/anaphase transition"/>
    <property type="evidence" value="ECO:0000318"/>
    <property type="project" value="GO_Central"/>
</dbReference>
<dbReference type="GO" id="GO:0006511">
    <property type="term" value="P:ubiquitin-dependent protein catabolic process"/>
    <property type="evidence" value="ECO:0000250"/>
    <property type="project" value="UniProtKB"/>
</dbReference>
<dbReference type="CDD" id="cd23791">
    <property type="entry name" value="UBCc_UBE2C"/>
    <property type="match status" value="1"/>
</dbReference>
<dbReference type="FunFam" id="3.10.110.10:FF:000039">
    <property type="entry name" value="Ubiquitin-conjugating enzyme E2 C"/>
    <property type="match status" value="1"/>
</dbReference>
<dbReference type="Gene3D" id="3.10.110.10">
    <property type="entry name" value="Ubiquitin Conjugating Enzyme"/>
    <property type="match status" value="1"/>
</dbReference>
<dbReference type="InterPro" id="IPR050113">
    <property type="entry name" value="Ub_conjugating_enzyme"/>
</dbReference>
<dbReference type="InterPro" id="IPR000608">
    <property type="entry name" value="UBQ-conjugat_E2_core"/>
</dbReference>
<dbReference type="InterPro" id="IPR023313">
    <property type="entry name" value="UBQ-conjugating_AS"/>
</dbReference>
<dbReference type="InterPro" id="IPR016135">
    <property type="entry name" value="UBQ-conjugating_enzyme/RWD"/>
</dbReference>
<dbReference type="PANTHER" id="PTHR24067">
    <property type="entry name" value="UBIQUITIN-CONJUGATING ENZYME E2"/>
    <property type="match status" value="1"/>
</dbReference>
<dbReference type="Pfam" id="PF00179">
    <property type="entry name" value="UQ_con"/>
    <property type="match status" value="1"/>
</dbReference>
<dbReference type="SMART" id="SM00212">
    <property type="entry name" value="UBCc"/>
    <property type="match status" value="1"/>
</dbReference>
<dbReference type="SUPFAM" id="SSF54495">
    <property type="entry name" value="UBC-like"/>
    <property type="match status" value="1"/>
</dbReference>
<dbReference type="PROSITE" id="PS00183">
    <property type="entry name" value="UBC_1"/>
    <property type="match status" value="1"/>
</dbReference>
<dbReference type="PROSITE" id="PS50127">
    <property type="entry name" value="UBC_2"/>
    <property type="match status" value="1"/>
</dbReference>
<keyword id="KW-0007">Acetylation</keyword>
<keyword id="KW-0067">ATP-binding</keyword>
<keyword id="KW-0131">Cell cycle</keyword>
<keyword id="KW-0132">Cell division</keyword>
<keyword id="KW-0498">Mitosis</keyword>
<keyword id="KW-0547">Nucleotide-binding</keyword>
<keyword id="KW-0597">Phosphoprotein</keyword>
<keyword id="KW-1185">Reference proteome</keyword>
<keyword id="KW-0808">Transferase</keyword>
<keyword id="KW-0832">Ubl conjugation</keyword>
<keyword id="KW-0833">Ubl conjugation pathway</keyword>
<feature type="initiator methionine" description="Removed" evidence="1">
    <location>
        <position position="1"/>
    </location>
</feature>
<feature type="chain" id="PRO_0000245040" description="Ubiquitin-conjugating enzyme E2 C">
    <location>
        <begin position="2"/>
        <end position="179"/>
    </location>
</feature>
<feature type="domain" description="UBC core" evidence="2">
    <location>
        <begin position="30"/>
        <end position="175"/>
    </location>
</feature>
<feature type="region of interest" description="Disordered" evidence="4">
    <location>
        <begin position="1"/>
        <end position="31"/>
    </location>
</feature>
<feature type="active site" description="Glycyl thioester intermediate" evidence="2 3">
    <location>
        <position position="114"/>
    </location>
</feature>
<feature type="modified residue" description="N-acetylalanine" evidence="1">
    <location>
        <position position="2"/>
    </location>
</feature>
<feature type="modified residue" description="Phosphoserine" evidence="1">
    <location>
        <position position="3"/>
    </location>
</feature>
<proteinExistence type="evidence at transcript level"/>
<comment type="function">
    <text evidence="1">Accepts ubiquitin from the E1 complex and catalyzes its covalent attachment to other proteins. In vitro catalyzes 'Lys-11'- and 'Lys-48'-linked polyubiquitination. Acts as an essential factor of the anaphase promoting complex/cyclosome (APC/C), a cell cycle-regulated ubiquitin ligase that controls progression through mitosis. Acts by initiating 'Lys-11'-linked polyubiquitin chains on APC/C substrates, leading to the degradation of APC/C substrates by the proteasome and promoting mitotic exit.</text>
</comment>
<comment type="catalytic activity">
    <reaction evidence="1 2 3">
        <text>S-ubiquitinyl-[E1 ubiquitin-activating enzyme]-L-cysteine + [E2 ubiquitin-conjugating enzyme]-L-cysteine = [E1 ubiquitin-activating enzyme]-L-cysteine + S-ubiquitinyl-[E2 ubiquitin-conjugating enzyme]-L-cysteine.</text>
        <dbReference type="EC" id="2.3.2.23"/>
    </reaction>
</comment>
<comment type="catalytic activity">
    <reaction evidence="1">
        <text>S-ubiquitinyl-[E1 ubiquitin-activating enzyme]-L-cysteine + [acceptor protein]-L-lysine = [E1 ubiquitin-activating enzyme]-L-cysteine + N(6)-monoubiquitinyl-[acceptor protein]-L-lysine.</text>
        <dbReference type="EC" id="2.3.2.24"/>
    </reaction>
</comment>
<comment type="pathway">
    <text evidence="2">Protein modification; protein ubiquitination.</text>
</comment>
<comment type="subunit">
    <text evidence="1">Component of the APC/C complex, composed of at least 14 distinct subunits that assemble into a complex of at least 19 chains with a combined molecular mass of around 1.2 MDa. Within this complex, directly interacts with ANAPC2.</text>
</comment>
<comment type="PTM">
    <text evidence="1">Autoubiquitinated by the APC/C complex, leading to its degradation by the proteasome. Its degradation plays a central role in APC/C regulation, allowing cyclin-A accumulation before S phase entry. APC/C substrates inhibit the autoubiquitination of UBE2C/UBCH10 but not its E2 function, hence APC/C remaining active until its substrates have been destroyed.</text>
</comment>
<comment type="similarity">
    <text evidence="2">Belongs to the ubiquitin-conjugating enzyme family.</text>
</comment>
<gene>
    <name type="primary">UBE2C</name>
    <name type="synonym">UBCH10</name>
</gene>